<comment type="function">
    <text evidence="1">Digests double-stranded RNA. Involved in the processing of primary rRNA transcript to yield the immediate precursors to the large and small rRNAs (23S and 16S). Processes some mRNAs, and tRNAs when they are encoded in the rRNA operon. Processes pre-crRNA and tracrRNA of type II CRISPR loci if present in the organism.</text>
</comment>
<comment type="catalytic activity">
    <reaction evidence="1">
        <text>Endonucleolytic cleavage to 5'-phosphomonoester.</text>
        <dbReference type="EC" id="3.1.26.3"/>
    </reaction>
</comment>
<comment type="cofactor">
    <cofactor evidence="1">
        <name>Mg(2+)</name>
        <dbReference type="ChEBI" id="CHEBI:18420"/>
    </cofactor>
</comment>
<comment type="subunit">
    <text evidence="1">Homodimer.</text>
</comment>
<comment type="subcellular location">
    <subcellularLocation>
        <location evidence="1">Cytoplasm</location>
    </subcellularLocation>
</comment>
<comment type="similarity">
    <text evidence="1">Belongs to the ribonuclease III family.</text>
</comment>
<evidence type="ECO:0000255" key="1">
    <source>
        <dbReference type="HAMAP-Rule" id="MF_00104"/>
    </source>
</evidence>
<dbReference type="EC" id="3.1.26.3" evidence="1"/>
<dbReference type="EMBL" id="CP000891">
    <property type="protein sequence ID" value="ABX48453.1"/>
    <property type="molecule type" value="Genomic_DNA"/>
</dbReference>
<dbReference type="RefSeq" id="WP_006080779.1">
    <property type="nucleotide sequence ID" value="NC_009997.1"/>
</dbReference>
<dbReference type="SMR" id="A9L5N6"/>
<dbReference type="GeneID" id="11771546"/>
<dbReference type="KEGG" id="sbn:Sbal195_1278"/>
<dbReference type="HOGENOM" id="CLU_000907_1_1_6"/>
<dbReference type="Proteomes" id="UP000000770">
    <property type="component" value="Chromosome"/>
</dbReference>
<dbReference type="GO" id="GO:0005737">
    <property type="term" value="C:cytoplasm"/>
    <property type="evidence" value="ECO:0007669"/>
    <property type="project" value="UniProtKB-SubCell"/>
</dbReference>
<dbReference type="GO" id="GO:0003725">
    <property type="term" value="F:double-stranded RNA binding"/>
    <property type="evidence" value="ECO:0007669"/>
    <property type="project" value="TreeGrafter"/>
</dbReference>
<dbReference type="GO" id="GO:0046872">
    <property type="term" value="F:metal ion binding"/>
    <property type="evidence" value="ECO:0007669"/>
    <property type="project" value="UniProtKB-KW"/>
</dbReference>
<dbReference type="GO" id="GO:0004525">
    <property type="term" value="F:ribonuclease III activity"/>
    <property type="evidence" value="ECO:0007669"/>
    <property type="project" value="UniProtKB-UniRule"/>
</dbReference>
<dbReference type="GO" id="GO:0019843">
    <property type="term" value="F:rRNA binding"/>
    <property type="evidence" value="ECO:0007669"/>
    <property type="project" value="UniProtKB-KW"/>
</dbReference>
<dbReference type="GO" id="GO:0006397">
    <property type="term" value="P:mRNA processing"/>
    <property type="evidence" value="ECO:0007669"/>
    <property type="project" value="UniProtKB-UniRule"/>
</dbReference>
<dbReference type="GO" id="GO:0010468">
    <property type="term" value="P:regulation of gene expression"/>
    <property type="evidence" value="ECO:0007669"/>
    <property type="project" value="TreeGrafter"/>
</dbReference>
<dbReference type="GO" id="GO:0006364">
    <property type="term" value="P:rRNA processing"/>
    <property type="evidence" value="ECO:0007669"/>
    <property type="project" value="UniProtKB-UniRule"/>
</dbReference>
<dbReference type="GO" id="GO:0008033">
    <property type="term" value="P:tRNA processing"/>
    <property type="evidence" value="ECO:0007669"/>
    <property type="project" value="UniProtKB-KW"/>
</dbReference>
<dbReference type="CDD" id="cd10845">
    <property type="entry name" value="DSRM_RNAse_III_family"/>
    <property type="match status" value="1"/>
</dbReference>
<dbReference type="CDD" id="cd00593">
    <property type="entry name" value="RIBOc"/>
    <property type="match status" value="1"/>
</dbReference>
<dbReference type="FunFam" id="1.10.1520.10:FF:000001">
    <property type="entry name" value="Ribonuclease 3"/>
    <property type="match status" value="1"/>
</dbReference>
<dbReference type="FunFam" id="3.30.160.20:FF:000003">
    <property type="entry name" value="Ribonuclease 3"/>
    <property type="match status" value="1"/>
</dbReference>
<dbReference type="Gene3D" id="3.30.160.20">
    <property type="match status" value="1"/>
</dbReference>
<dbReference type="Gene3D" id="1.10.1520.10">
    <property type="entry name" value="Ribonuclease III domain"/>
    <property type="match status" value="1"/>
</dbReference>
<dbReference type="HAMAP" id="MF_00104">
    <property type="entry name" value="RNase_III"/>
    <property type="match status" value="1"/>
</dbReference>
<dbReference type="InterPro" id="IPR014720">
    <property type="entry name" value="dsRBD_dom"/>
</dbReference>
<dbReference type="InterPro" id="IPR011907">
    <property type="entry name" value="RNase_III"/>
</dbReference>
<dbReference type="InterPro" id="IPR000999">
    <property type="entry name" value="RNase_III_dom"/>
</dbReference>
<dbReference type="InterPro" id="IPR036389">
    <property type="entry name" value="RNase_III_sf"/>
</dbReference>
<dbReference type="NCBIfam" id="TIGR02191">
    <property type="entry name" value="RNaseIII"/>
    <property type="match status" value="1"/>
</dbReference>
<dbReference type="PANTHER" id="PTHR11207:SF0">
    <property type="entry name" value="RIBONUCLEASE 3"/>
    <property type="match status" value="1"/>
</dbReference>
<dbReference type="PANTHER" id="PTHR11207">
    <property type="entry name" value="RIBONUCLEASE III"/>
    <property type="match status" value="1"/>
</dbReference>
<dbReference type="Pfam" id="PF00035">
    <property type="entry name" value="dsrm"/>
    <property type="match status" value="1"/>
</dbReference>
<dbReference type="Pfam" id="PF14622">
    <property type="entry name" value="Ribonucleas_3_3"/>
    <property type="match status" value="1"/>
</dbReference>
<dbReference type="SMART" id="SM00358">
    <property type="entry name" value="DSRM"/>
    <property type="match status" value="1"/>
</dbReference>
<dbReference type="SMART" id="SM00535">
    <property type="entry name" value="RIBOc"/>
    <property type="match status" value="1"/>
</dbReference>
<dbReference type="SUPFAM" id="SSF54768">
    <property type="entry name" value="dsRNA-binding domain-like"/>
    <property type="match status" value="1"/>
</dbReference>
<dbReference type="SUPFAM" id="SSF69065">
    <property type="entry name" value="RNase III domain-like"/>
    <property type="match status" value="1"/>
</dbReference>
<dbReference type="PROSITE" id="PS50137">
    <property type="entry name" value="DS_RBD"/>
    <property type="match status" value="1"/>
</dbReference>
<dbReference type="PROSITE" id="PS00517">
    <property type="entry name" value="RNASE_3_1"/>
    <property type="match status" value="1"/>
</dbReference>
<dbReference type="PROSITE" id="PS50142">
    <property type="entry name" value="RNASE_3_2"/>
    <property type="match status" value="1"/>
</dbReference>
<reference key="1">
    <citation type="submission" date="2007-11" db="EMBL/GenBank/DDBJ databases">
        <title>Complete sequence of chromosome of Shewanella baltica OS195.</title>
        <authorList>
            <consortium name="US DOE Joint Genome Institute"/>
            <person name="Copeland A."/>
            <person name="Lucas S."/>
            <person name="Lapidus A."/>
            <person name="Barry K."/>
            <person name="Glavina del Rio T."/>
            <person name="Dalin E."/>
            <person name="Tice H."/>
            <person name="Pitluck S."/>
            <person name="Chain P."/>
            <person name="Malfatti S."/>
            <person name="Shin M."/>
            <person name="Vergez L."/>
            <person name="Schmutz J."/>
            <person name="Larimer F."/>
            <person name="Land M."/>
            <person name="Hauser L."/>
            <person name="Kyrpides N."/>
            <person name="Kim E."/>
            <person name="Brettar I."/>
            <person name="Rodrigues J."/>
            <person name="Konstantinidis K."/>
            <person name="Klappenbach J."/>
            <person name="Hofle M."/>
            <person name="Tiedje J."/>
            <person name="Richardson P."/>
        </authorList>
    </citation>
    <scope>NUCLEOTIDE SEQUENCE [LARGE SCALE GENOMIC DNA]</scope>
    <source>
        <strain>OS195</strain>
    </source>
</reference>
<sequence length="226" mass="25353">MEPIKNLPRLCRTLSYEFKNIELLTQALTHRSAANKHNERLEFLGDSILSIVISDALYHQFPKATEGDLSRMRATLVRGDTLTIIAQEFKLGDYLYLGPGELKSGGFRRESILADAVEAIIGAVYLDSDLEVCRALLLKWYAERLAEIQPGISQKDAKTLLQEHLQGFKKPLPDYQVINIEGDAHDQTFTVECRIEDLSQSVIGVASSRRKAEQIAAAQVLELLKK</sequence>
<feature type="chain" id="PRO_1000075810" description="Ribonuclease 3">
    <location>
        <begin position="1"/>
        <end position="226"/>
    </location>
</feature>
<feature type="domain" description="RNase III" evidence="1">
    <location>
        <begin position="7"/>
        <end position="129"/>
    </location>
</feature>
<feature type="domain" description="DRBM" evidence="1">
    <location>
        <begin position="156"/>
        <end position="226"/>
    </location>
</feature>
<feature type="active site" evidence="1">
    <location>
        <position position="46"/>
    </location>
</feature>
<feature type="active site" evidence="1">
    <location>
        <position position="118"/>
    </location>
</feature>
<feature type="binding site" evidence="1">
    <location>
        <position position="42"/>
    </location>
    <ligand>
        <name>Mg(2+)</name>
        <dbReference type="ChEBI" id="CHEBI:18420"/>
    </ligand>
</feature>
<feature type="binding site" evidence="1">
    <location>
        <position position="115"/>
    </location>
    <ligand>
        <name>Mg(2+)</name>
        <dbReference type="ChEBI" id="CHEBI:18420"/>
    </ligand>
</feature>
<feature type="binding site" evidence="1">
    <location>
        <position position="118"/>
    </location>
    <ligand>
        <name>Mg(2+)</name>
        <dbReference type="ChEBI" id="CHEBI:18420"/>
    </ligand>
</feature>
<name>RNC_SHEB9</name>
<gene>
    <name evidence="1" type="primary">rnc</name>
    <name type="ordered locus">Sbal195_1278</name>
</gene>
<keyword id="KW-0963">Cytoplasm</keyword>
<keyword id="KW-0255">Endonuclease</keyword>
<keyword id="KW-0378">Hydrolase</keyword>
<keyword id="KW-0460">Magnesium</keyword>
<keyword id="KW-0479">Metal-binding</keyword>
<keyword id="KW-0507">mRNA processing</keyword>
<keyword id="KW-0540">Nuclease</keyword>
<keyword id="KW-0694">RNA-binding</keyword>
<keyword id="KW-0698">rRNA processing</keyword>
<keyword id="KW-0699">rRNA-binding</keyword>
<keyword id="KW-0819">tRNA processing</keyword>
<organism>
    <name type="scientific">Shewanella baltica (strain OS195)</name>
    <dbReference type="NCBI Taxonomy" id="399599"/>
    <lineage>
        <taxon>Bacteria</taxon>
        <taxon>Pseudomonadati</taxon>
        <taxon>Pseudomonadota</taxon>
        <taxon>Gammaproteobacteria</taxon>
        <taxon>Alteromonadales</taxon>
        <taxon>Shewanellaceae</taxon>
        <taxon>Shewanella</taxon>
    </lineage>
</organism>
<proteinExistence type="inferred from homology"/>
<accession>A9L5N6</accession>
<protein>
    <recommendedName>
        <fullName evidence="1">Ribonuclease 3</fullName>
        <ecNumber evidence="1">3.1.26.3</ecNumber>
    </recommendedName>
    <alternativeName>
        <fullName evidence="1">Ribonuclease III</fullName>
        <shortName evidence="1">RNase III</shortName>
    </alternativeName>
</protein>